<proteinExistence type="evidence at protein level"/>
<reference key="1">
    <citation type="journal article" date="1996" name="DNA Res.">
        <title>A 570-kb DNA sequence of the Escherichia coli K-12 genome corresponding to the 28.0-40.1 min region on the linkage map.</title>
        <authorList>
            <person name="Aiba H."/>
            <person name="Baba T."/>
            <person name="Fujita K."/>
            <person name="Hayashi K."/>
            <person name="Inada T."/>
            <person name="Isono K."/>
            <person name="Itoh T."/>
            <person name="Kasai H."/>
            <person name="Kashimoto K."/>
            <person name="Kimura S."/>
            <person name="Kitakawa M."/>
            <person name="Kitagawa M."/>
            <person name="Makino K."/>
            <person name="Miki T."/>
            <person name="Mizobuchi K."/>
            <person name="Mori H."/>
            <person name="Mori T."/>
            <person name="Motomura K."/>
            <person name="Nakade S."/>
            <person name="Nakamura Y."/>
            <person name="Nashimoto H."/>
            <person name="Nishio Y."/>
            <person name="Oshima T."/>
            <person name="Saito N."/>
            <person name="Sampei G."/>
            <person name="Seki Y."/>
            <person name="Sivasundaram S."/>
            <person name="Tagami H."/>
            <person name="Takeda J."/>
            <person name="Takemoto K."/>
            <person name="Takeuchi Y."/>
            <person name="Wada C."/>
            <person name="Yamamoto Y."/>
            <person name="Horiuchi T."/>
        </authorList>
    </citation>
    <scope>NUCLEOTIDE SEQUENCE [LARGE SCALE GENOMIC DNA]</scope>
    <source>
        <strain>K12 / W3110 / ATCC 27325 / DSM 5911</strain>
    </source>
</reference>
<reference key="2">
    <citation type="journal article" date="1997" name="Science">
        <title>The complete genome sequence of Escherichia coli K-12.</title>
        <authorList>
            <person name="Blattner F.R."/>
            <person name="Plunkett G. III"/>
            <person name="Bloch C.A."/>
            <person name="Perna N.T."/>
            <person name="Burland V."/>
            <person name="Riley M."/>
            <person name="Collado-Vides J."/>
            <person name="Glasner J.D."/>
            <person name="Rode C.K."/>
            <person name="Mayhew G.F."/>
            <person name="Gregor J."/>
            <person name="Davis N.W."/>
            <person name="Kirkpatrick H.A."/>
            <person name="Goeden M.A."/>
            <person name="Rose D.J."/>
            <person name="Mau B."/>
            <person name="Shao Y."/>
        </authorList>
    </citation>
    <scope>NUCLEOTIDE SEQUENCE [LARGE SCALE GENOMIC DNA]</scope>
    <source>
        <strain>K12 / MG1655 / ATCC 47076</strain>
    </source>
</reference>
<reference key="3">
    <citation type="journal article" date="2006" name="Mol. Syst. Biol.">
        <title>Highly accurate genome sequences of Escherichia coli K-12 strains MG1655 and W3110.</title>
        <authorList>
            <person name="Hayashi K."/>
            <person name="Morooka N."/>
            <person name="Yamamoto Y."/>
            <person name="Fujita K."/>
            <person name="Isono K."/>
            <person name="Choi S."/>
            <person name="Ohtsubo E."/>
            <person name="Baba T."/>
            <person name="Wanner B.L."/>
            <person name="Mori H."/>
            <person name="Horiuchi T."/>
        </authorList>
    </citation>
    <scope>NUCLEOTIDE SEQUENCE [LARGE SCALE GENOMIC DNA]</scope>
    <source>
        <strain>K12 / W3110 / ATCC 27325 / DSM 5911</strain>
    </source>
</reference>
<reference key="4">
    <citation type="journal article" date="1989" name="Mol. Gen. Genet.">
        <title>Cloning and molecular characterization of the gene rimL which encodes an enzyme acetylating ribosomal protein L12 of Escherichia coli K12.</title>
        <authorList>
            <person name="Tanaka S."/>
            <person name="Matsushita Y."/>
            <person name="Yoshikawa A."/>
            <person name="Isono K."/>
        </authorList>
    </citation>
    <scope>NUCLEOTIDE SEQUENCE [GENOMIC DNA] OF 495-551</scope>
    <source>
        <strain>MB2052</strain>
    </source>
</reference>
<reference key="5">
    <citation type="journal article" date="1997" name="Electrophoresis">
        <title>Comparing the predicted and observed properties of proteins encoded in the genome of Escherichia coli K-12.</title>
        <authorList>
            <person name="Link A.J."/>
            <person name="Robison K."/>
            <person name="Church G.M."/>
        </authorList>
    </citation>
    <scope>PROTEIN SEQUENCE OF 33-44</scope>
    <source>
        <strain>K12 / EMG2</strain>
    </source>
</reference>
<reference key="6">
    <citation type="journal article" date="1995" name="Nucleic Acids Res.">
        <title>Detection of new genes in a bacterial genome using Markov models for three gene classes.</title>
        <authorList>
            <person name="Borodovsky M."/>
            <person name="McIninch J."/>
            <person name="Koonin E.V."/>
            <person name="Rudd K.E."/>
            <person name="Medigue C."/>
            <person name="Danchin A."/>
        </authorList>
    </citation>
    <scope>IDENTIFICATION</scope>
</reference>
<reference key="7">
    <citation type="journal article" date="2004" name="J. Bacteriol.">
        <title>Identification of mdoD, an mdoG paralog which encodes a twin-arginine-dependent periplasmic protein that controls osmoregulated periplasmic glucan backbone structures.</title>
        <authorList>
            <person name="Lequette Y."/>
            <person name="Oedberg-Ferragut C."/>
            <person name="Bohin J.-P."/>
            <person name="Lacroix J.-M."/>
        </authorList>
    </citation>
    <scope>CHARACTERIZATION</scope>
    <scope>EXPORT VIA THE TAT-SYSTEM</scope>
    <source>
        <strain>K12</strain>
    </source>
</reference>
<reference key="8">
    <citation type="journal article" date="2007" name="J. Biol. Chem.">
        <title>Export pathway selectivity of Escherichia coli twin arginine translocation signal peptides.</title>
        <authorList>
            <person name="Tullman-Ercek D."/>
            <person name="DeLisa M.P."/>
            <person name="Kawarasaki Y."/>
            <person name="Iranpour P."/>
            <person name="Ribnicky B."/>
            <person name="Palmer T."/>
            <person name="Georgiou G."/>
        </authorList>
    </citation>
    <scope>EXPORT VIA THE TAT-SYSTEM AND THE SEC-SYSTEM</scope>
</reference>
<dbReference type="EMBL" id="U00096">
    <property type="protein sequence ID" value="AAC74506.3"/>
    <property type="molecule type" value="Genomic_DNA"/>
</dbReference>
<dbReference type="EMBL" id="AP009048">
    <property type="protein sequence ID" value="BAA15046.1"/>
    <property type="status" value="ALT_INIT"/>
    <property type="molecule type" value="Genomic_DNA"/>
</dbReference>
<dbReference type="EMBL" id="X15860">
    <property type="status" value="NOT_ANNOTATED_CDS"/>
    <property type="molecule type" value="Genomic_DNA"/>
</dbReference>
<dbReference type="PIR" id="C64894">
    <property type="entry name" value="C64894"/>
</dbReference>
<dbReference type="RefSeq" id="NP_415941.5">
    <property type="nucleotide sequence ID" value="NC_000913.3"/>
</dbReference>
<dbReference type="RefSeq" id="WP_000375961.1">
    <property type="nucleotide sequence ID" value="NZ_SSZK01000021.1"/>
</dbReference>
<dbReference type="PDB" id="8IOX">
    <property type="method" value="X-ray"/>
    <property type="resolution" value="2.95 A"/>
    <property type="chains" value="A/B/C/D/E/F/G/H/I/J/K/L=1-551"/>
</dbReference>
<dbReference type="PDB" id="8IP1">
    <property type="method" value="X-ray"/>
    <property type="resolution" value="2.06 A"/>
    <property type="chains" value="A/B=1-551"/>
</dbReference>
<dbReference type="PDBsum" id="8IOX"/>
<dbReference type="PDBsum" id="8IP1"/>
<dbReference type="SMR" id="P40120"/>
<dbReference type="BioGRID" id="4261154">
    <property type="interactions" value="18"/>
</dbReference>
<dbReference type="FunCoup" id="P40120">
    <property type="interactions" value="31"/>
</dbReference>
<dbReference type="IntAct" id="P40120">
    <property type="interactions" value="6"/>
</dbReference>
<dbReference type="STRING" id="511145.b1424"/>
<dbReference type="jPOST" id="P40120"/>
<dbReference type="PaxDb" id="511145-b1424"/>
<dbReference type="EnsemblBacteria" id="AAC74506">
    <property type="protein sequence ID" value="AAC74506"/>
    <property type="gene ID" value="b1424"/>
</dbReference>
<dbReference type="GeneID" id="945994"/>
<dbReference type="KEGG" id="ecj:JW1420"/>
<dbReference type="KEGG" id="eco:b1424"/>
<dbReference type="KEGG" id="ecoc:C3026_08290"/>
<dbReference type="PATRIC" id="fig|511145.12.peg.1487"/>
<dbReference type="EchoBASE" id="EB2701"/>
<dbReference type="eggNOG" id="COG3131">
    <property type="taxonomic scope" value="Bacteria"/>
</dbReference>
<dbReference type="HOGENOM" id="CLU_023403_2_0_6"/>
<dbReference type="InParanoid" id="P40120"/>
<dbReference type="OMA" id="DVQFFHV"/>
<dbReference type="OrthoDB" id="335750at2"/>
<dbReference type="PhylomeDB" id="P40120"/>
<dbReference type="BioCyc" id="EcoCyc:EG12859-MONOMER"/>
<dbReference type="UniPathway" id="UPA00637"/>
<dbReference type="PHI-base" id="PHI:10993"/>
<dbReference type="PRO" id="PR:P40120"/>
<dbReference type="Proteomes" id="UP000000625">
    <property type="component" value="Chromosome"/>
</dbReference>
<dbReference type="GO" id="GO:0030288">
    <property type="term" value="C:outer membrane-bounded periplasmic space"/>
    <property type="evidence" value="ECO:0000314"/>
    <property type="project" value="EcoCyc"/>
</dbReference>
<dbReference type="GO" id="GO:0030246">
    <property type="term" value="F:carbohydrate binding"/>
    <property type="evidence" value="ECO:0007669"/>
    <property type="project" value="InterPro"/>
</dbReference>
<dbReference type="GO" id="GO:0003824">
    <property type="term" value="F:catalytic activity"/>
    <property type="evidence" value="ECO:0007669"/>
    <property type="project" value="InterPro"/>
</dbReference>
<dbReference type="GO" id="GO:0051274">
    <property type="term" value="P:beta-glucan biosynthetic process"/>
    <property type="evidence" value="ECO:0000318"/>
    <property type="project" value="GO_Central"/>
</dbReference>
<dbReference type="GO" id="GO:0009250">
    <property type="term" value="P:glucan biosynthetic process"/>
    <property type="evidence" value="ECO:0000315"/>
    <property type="project" value="EcoCyc"/>
</dbReference>
<dbReference type="FunFam" id="2.60.40.10:FF:000379">
    <property type="entry name" value="Glucans biosynthesis protein D"/>
    <property type="match status" value="1"/>
</dbReference>
<dbReference type="FunFam" id="2.70.98.10:FF:000004">
    <property type="entry name" value="Glucans biosynthesis protein D"/>
    <property type="match status" value="1"/>
</dbReference>
<dbReference type="Gene3D" id="2.70.98.10">
    <property type="match status" value="1"/>
</dbReference>
<dbReference type="Gene3D" id="2.60.40.10">
    <property type="entry name" value="Immunoglobulins"/>
    <property type="match status" value="1"/>
</dbReference>
<dbReference type="HAMAP" id="MF_01068">
    <property type="entry name" value="MdoD_OpgD"/>
    <property type="match status" value="1"/>
</dbReference>
<dbReference type="InterPro" id="IPR011013">
    <property type="entry name" value="Gal_mutarotase_sf_dom"/>
</dbReference>
<dbReference type="InterPro" id="IPR014718">
    <property type="entry name" value="GH-type_carb-bd"/>
</dbReference>
<dbReference type="InterPro" id="IPR023724">
    <property type="entry name" value="Glucan_biosyn_MdoD"/>
</dbReference>
<dbReference type="InterPro" id="IPR014438">
    <property type="entry name" value="Glucan_biosyn_MdoG/MdoD"/>
</dbReference>
<dbReference type="InterPro" id="IPR007444">
    <property type="entry name" value="Glucan_biosyn_MdoG_C"/>
</dbReference>
<dbReference type="InterPro" id="IPR013783">
    <property type="entry name" value="Ig-like_fold"/>
</dbReference>
<dbReference type="InterPro" id="IPR014756">
    <property type="entry name" value="Ig_E-set"/>
</dbReference>
<dbReference type="InterPro" id="IPR006311">
    <property type="entry name" value="TAT_signal"/>
</dbReference>
<dbReference type="InterPro" id="IPR019546">
    <property type="entry name" value="TAT_signal_bac_arc"/>
</dbReference>
<dbReference type="NCBIfam" id="TIGR01409">
    <property type="entry name" value="TAT_signal_seq"/>
    <property type="match status" value="1"/>
</dbReference>
<dbReference type="PANTHER" id="PTHR30504">
    <property type="entry name" value="GLUCANS BIOSYNTHESIS PROTEIN"/>
    <property type="match status" value="1"/>
</dbReference>
<dbReference type="PANTHER" id="PTHR30504:SF3">
    <property type="entry name" value="GLUCANS BIOSYNTHESIS PROTEIN D"/>
    <property type="match status" value="1"/>
</dbReference>
<dbReference type="Pfam" id="PF04349">
    <property type="entry name" value="MdoG"/>
    <property type="match status" value="1"/>
</dbReference>
<dbReference type="PIRSF" id="PIRSF006281">
    <property type="entry name" value="MdoG"/>
    <property type="match status" value="1"/>
</dbReference>
<dbReference type="SUPFAM" id="SSF81296">
    <property type="entry name" value="E set domains"/>
    <property type="match status" value="1"/>
</dbReference>
<dbReference type="SUPFAM" id="SSF74650">
    <property type="entry name" value="Galactose mutarotase-like"/>
    <property type="match status" value="1"/>
</dbReference>
<dbReference type="PROSITE" id="PS51318">
    <property type="entry name" value="TAT"/>
    <property type="match status" value="1"/>
</dbReference>
<keyword id="KW-0002">3D-structure</keyword>
<keyword id="KW-0903">Direct protein sequencing</keyword>
<keyword id="KW-0574">Periplasm</keyword>
<keyword id="KW-1185">Reference proteome</keyword>
<keyword id="KW-0732">Signal</keyword>
<protein>
    <recommendedName>
        <fullName>Glucans biosynthesis protein D</fullName>
    </recommendedName>
</protein>
<name>OPGD_ECOLI</name>
<feature type="signal peptide" description="Tat-type signal" evidence="1">
    <location>
        <begin position="1"/>
        <end position="32"/>
    </location>
</feature>
<feature type="chain" id="PRO_0000020206" description="Glucans biosynthesis protein D">
    <location>
        <begin position="33"/>
        <end position="551"/>
    </location>
</feature>
<feature type="strand" evidence="3">
    <location>
        <begin position="42"/>
        <end position="44"/>
    </location>
</feature>
<feature type="helix" evidence="4">
    <location>
        <begin position="47"/>
        <end position="58"/>
    </location>
</feature>
<feature type="helix" evidence="4">
    <location>
        <begin position="71"/>
        <end position="74"/>
    </location>
</feature>
<feature type="helix" evidence="4">
    <location>
        <begin position="78"/>
        <end position="82"/>
    </location>
</feature>
<feature type="strand" evidence="3">
    <location>
        <begin position="84"/>
        <end position="86"/>
    </location>
</feature>
<feature type="helix" evidence="4">
    <location>
        <begin position="88"/>
        <end position="90"/>
    </location>
</feature>
<feature type="turn" evidence="4">
    <location>
        <begin position="92"/>
        <end position="95"/>
    </location>
</feature>
<feature type="strand" evidence="4">
    <location>
        <begin position="100"/>
        <end position="107"/>
    </location>
</feature>
<feature type="strand" evidence="4">
    <location>
        <begin position="116"/>
        <end position="122"/>
    </location>
</feature>
<feature type="turn" evidence="4">
    <location>
        <begin position="123"/>
        <end position="126"/>
    </location>
</feature>
<feature type="strand" evidence="4">
    <location>
        <begin position="127"/>
        <end position="131"/>
    </location>
</feature>
<feature type="helix" evidence="4">
    <location>
        <begin position="135"/>
        <end position="137"/>
    </location>
</feature>
<feature type="strand" evidence="4">
    <location>
        <begin position="138"/>
        <end position="143"/>
    </location>
</feature>
<feature type="helix" evidence="3">
    <location>
        <begin position="147"/>
        <end position="150"/>
    </location>
</feature>
<feature type="strand" evidence="4">
    <location>
        <begin position="158"/>
        <end position="165"/>
    </location>
</feature>
<feature type="strand" evidence="4">
    <location>
        <begin position="168"/>
        <end position="172"/>
    </location>
</feature>
<feature type="strand" evidence="4">
    <location>
        <begin position="174"/>
        <end position="179"/>
    </location>
</feature>
<feature type="strand" evidence="4">
    <location>
        <begin position="182"/>
        <end position="185"/>
    </location>
</feature>
<feature type="strand" evidence="4">
    <location>
        <begin position="195"/>
        <end position="198"/>
    </location>
</feature>
<feature type="strand" evidence="4">
    <location>
        <begin position="200"/>
        <end position="207"/>
    </location>
</feature>
<feature type="strand" evidence="4">
    <location>
        <begin position="213"/>
        <end position="220"/>
    </location>
</feature>
<feature type="strand" evidence="4">
    <location>
        <begin position="228"/>
        <end position="237"/>
    </location>
</feature>
<feature type="strand" evidence="4">
    <location>
        <begin position="240"/>
        <end position="250"/>
    </location>
</feature>
<feature type="strand" evidence="4">
    <location>
        <begin position="255"/>
        <end position="267"/>
    </location>
</feature>
<feature type="strand" evidence="4">
    <location>
        <begin position="272"/>
        <end position="279"/>
    </location>
</feature>
<feature type="strand" evidence="4">
    <location>
        <begin position="281"/>
        <end position="283"/>
    </location>
</feature>
<feature type="strand" evidence="4">
    <location>
        <begin position="285"/>
        <end position="287"/>
    </location>
</feature>
<feature type="strand" evidence="4">
    <location>
        <begin position="298"/>
        <end position="300"/>
    </location>
</feature>
<feature type="strand" evidence="4">
    <location>
        <begin position="302"/>
        <end position="307"/>
    </location>
</feature>
<feature type="strand" evidence="4">
    <location>
        <begin position="313"/>
        <end position="317"/>
    </location>
</feature>
<feature type="strand" evidence="4">
    <location>
        <begin position="325"/>
        <end position="333"/>
    </location>
</feature>
<feature type="strand" evidence="4">
    <location>
        <begin position="336"/>
        <end position="340"/>
    </location>
</feature>
<feature type="helix" evidence="4">
    <location>
        <begin position="346"/>
        <end position="348"/>
    </location>
</feature>
<feature type="turn" evidence="4">
    <location>
        <begin position="352"/>
        <end position="354"/>
    </location>
</feature>
<feature type="helix" evidence="4">
    <location>
        <begin position="356"/>
        <end position="358"/>
    </location>
</feature>
<feature type="strand" evidence="4">
    <location>
        <begin position="361"/>
        <end position="368"/>
    </location>
</feature>
<feature type="strand" evidence="4">
    <location>
        <begin position="372"/>
        <end position="379"/>
    </location>
</feature>
<feature type="strand" evidence="4">
    <location>
        <begin position="383"/>
        <end position="387"/>
    </location>
</feature>
<feature type="strand" evidence="4">
    <location>
        <begin position="390"/>
        <end position="398"/>
    </location>
</feature>
<feature type="strand" evidence="4">
    <location>
        <begin position="405"/>
        <end position="417"/>
    </location>
</feature>
<feature type="strand" evidence="4">
    <location>
        <begin position="423"/>
        <end position="434"/>
    </location>
</feature>
<feature type="strand" evidence="4">
    <location>
        <begin position="444"/>
        <end position="446"/>
    </location>
</feature>
<feature type="strand" evidence="4">
    <location>
        <begin position="453"/>
        <end position="461"/>
    </location>
</feature>
<feature type="helix" evidence="4">
    <location>
        <begin position="464"/>
        <end position="467"/>
    </location>
</feature>
<feature type="helix" evidence="4">
    <location>
        <begin position="468"/>
        <end position="470"/>
    </location>
</feature>
<feature type="strand" evidence="4">
    <location>
        <begin position="473"/>
        <end position="491"/>
    </location>
</feature>
<feature type="helix" evidence="4">
    <location>
        <begin position="492"/>
        <end position="494"/>
    </location>
</feature>
<feature type="strand" evidence="4">
    <location>
        <begin position="496"/>
        <end position="504"/>
    </location>
</feature>
<feature type="strand" evidence="3">
    <location>
        <begin position="506"/>
        <end position="508"/>
    </location>
</feature>
<feature type="strand" evidence="4">
    <location>
        <begin position="513"/>
        <end position="521"/>
    </location>
</feature>
<feature type="strand" evidence="4">
    <location>
        <begin position="529"/>
        <end position="534"/>
    </location>
</feature>
<feature type="helix" evidence="4">
    <location>
        <begin position="539"/>
        <end position="541"/>
    </location>
</feature>
<sequence>MDRRRFIKGSMAMAAVCGTSGIASLFSQAAFAADSDIADGQTQRFDFSILQSMAHDLAQTAWRGAPRPLPDTLATMTPQAYNSIQYDAEKSLWHNVENRQLDAQFFHMGMGFRRRVRMFSVDPATHLAREIHFRPELFKYNDAGVDTKQLEGQSDLGFAGFRVFKAPELARRDVVSFLGASYFRAVDDTYQYGLSARGLAIDTYTDSKEEFPDFTAFWFDTVKPGATTFTVYALLDSASITGAYKFTIHCEKSQVIMDVENHLYARKDIKQLGIAPMTSMFSCGTNERRMCDTIHPQIHDSDRLSMWRGNGEWICRPLNNPQKLQFNAYTDNNPKGFGLLQLDRDFSHYQDIMGWYNKRPSLWVEPRNKWGKGTIGLMEIPTTGETLDNIVCFWQPEKAVKAGDEFAFQYRLYWSAQPPVHCPLARVMATRTGMGGFSEGWAPGEHYPEKWARRFAVDFVGGDLKAAAPKGIEPVITLSSGEAKQIEILYIEPIDGYRIQFDWYPTSDSTDPVDMRMYLRCQGDAISETWLYQYFPPAPDKRQYVDDRVMS</sequence>
<organism>
    <name type="scientific">Escherichia coli (strain K12)</name>
    <dbReference type="NCBI Taxonomy" id="83333"/>
    <lineage>
        <taxon>Bacteria</taxon>
        <taxon>Pseudomonadati</taxon>
        <taxon>Pseudomonadota</taxon>
        <taxon>Gammaproteobacteria</taxon>
        <taxon>Enterobacterales</taxon>
        <taxon>Enterobacteriaceae</taxon>
        <taxon>Escherichia</taxon>
    </lineage>
</organism>
<evidence type="ECO:0000269" key="1">
    <source>
    </source>
</evidence>
<evidence type="ECO:0000305" key="2"/>
<evidence type="ECO:0007829" key="3">
    <source>
        <dbReference type="PDB" id="8IOX"/>
    </source>
</evidence>
<evidence type="ECO:0007829" key="4">
    <source>
        <dbReference type="PDB" id="8IP1"/>
    </source>
</evidence>
<accession>P40120</accession>
<accession>P46134</accession>
<accession>P76098</accession>
<accession>P77631</accession>
<gene>
    <name type="primary">mdoD</name>
    <name type="synonym">opgD</name>
    <name type="synonym">ydcG</name>
    <name type="synonym">yzzZ</name>
    <name type="ordered locus">b1424</name>
    <name type="ordered locus">JW1420</name>
</gene>
<comment type="function">
    <text>Probably involved in the control of the structural glucose backbone of osmoregulated periplasmic glucans (OPGs).</text>
</comment>
<comment type="pathway">
    <text>Glycan metabolism; osmoregulated periplasmic glucan (OPG) biosynthesis.</text>
</comment>
<comment type="subcellular location">
    <subcellularLocation>
        <location>Periplasm</location>
    </subcellularLocation>
</comment>
<comment type="developmental stage">
    <text>Expressed essentially during the stationary growth phase when OPG synthesis has stopped.</text>
</comment>
<comment type="PTM">
    <text>Exported by the Tat system. The position of the signal peptide cleavage has been experimentally proven. Can also be exported by the Sec system.</text>
</comment>
<comment type="similarity">
    <text evidence="2">Belongs to the OpgD/OpgG family.</text>
</comment>
<comment type="sequence caution" evidence="2">
    <conflict type="erroneous initiation">
        <sequence resource="EMBL-CDS" id="BAA15046"/>
    </conflict>
</comment>